<dbReference type="EMBL" id="AJ721009">
    <property type="protein sequence ID" value="CAG32668.1"/>
    <property type="molecule type" value="mRNA"/>
</dbReference>
<dbReference type="RefSeq" id="NP_001103256.1">
    <property type="nucleotide sequence ID" value="NM_001109786.2"/>
</dbReference>
<dbReference type="SMR" id="Q5ZHX5"/>
<dbReference type="FunCoup" id="Q5ZHX5">
    <property type="interactions" value="1665"/>
</dbReference>
<dbReference type="STRING" id="9031.ENSGALP00000053685"/>
<dbReference type="GlyGen" id="Q5ZHX5">
    <property type="glycosylation" value="1 site"/>
</dbReference>
<dbReference type="PaxDb" id="9031-ENSGALP00000033978"/>
<dbReference type="Ensembl" id="ENSGALT00010060077.1">
    <property type="protein sequence ID" value="ENSGALP00010036837.1"/>
    <property type="gene ID" value="ENSGALG00010024620.1"/>
</dbReference>
<dbReference type="GeneID" id="768763"/>
<dbReference type="KEGG" id="gga:768763"/>
<dbReference type="CTD" id="79684"/>
<dbReference type="VEuPathDB" id="HostDB:geneid_768763"/>
<dbReference type="eggNOG" id="ENOG502QU4E">
    <property type="taxonomic scope" value="Eukaryota"/>
</dbReference>
<dbReference type="GeneTree" id="ENSGT00390000013593"/>
<dbReference type="InParanoid" id="Q5ZHX5"/>
<dbReference type="OrthoDB" id="691673at2759"/>
<dbReference type="PhylomeDB" id="Q5ZHX5"/>
<dbReference type="PRO" id="PR:Q5ZHX5"/>
<dbReference type="Proteomes" id="UP000000539">
    <property type="component" value="Chromosome 24"/>
</dbReference>
<dbReference type="Gene3D" id="1.10.10.60">
    <property type="entry name" value="Homeodomain-like"/>
    <property type="match status" value="1"/>
</dbReference>
<dbReference type="InterPro" id="IPR042792">
    <property type="entry name" value="MSANTD2"/>
</dbReference>
<dbReference type="InterPro" id="IPR044822">
    <property type="entry name" value="Myb_DNA-bind_4"/>
</dbReference>
<dbReference type="PANTHER" id="PTHR46933">
    <property type="entry name" value="MYB/SANT-LIKE DNA-BINDING DOMAIN-CONTAINING PROTEIN 2"/>
    <property type="match status" value="1"/>
</dbReference>
<dbReference type="PANTHER" id="PTHR46933:SF1">
    <property type="entry name" value="MYB_SANT-LIKE DNA-BINDING DOMAIN-CONTAINING PROTEIN 2"/>
    <property type="match status" value="1"/>
</dbReference>
<dbReference type="Pfam" id="PF13837">
    <property type="entry name" value="Myb_DNA-bind_4"/>
    <property type="match status" value="1"/>
</dbReference>
<name>MSD2_CHICK</name>
<reference key="1">
    <citation type="journal article" date="2005" name="Genome Biol.">
        <title>Full-length cDNAs from chicken bursal lymphocytes to facilitate gene function analysis.</title>
        <authorList>
            <person name="Caldwell R.B."/>
            <person name="Kierzek A.M."/>
            <person name="Arakawa H."/>
            <person name="Bezzubov Y."/>
            <person name="Zaim J."/>
            <person name="Fiedler P."/>
            <person name="Kutter S."/>
            <person name="Blagodatski A."/>
            <person name="Kostovska D."/>
            <person name="Koter M."/>
            <person name="Plachy J."/>
            <person name="Carninci P."/>
            <person name="Hayashizaki Y."/>
            <person name="Buerstedde J.-M."/>
        </authorList>
    </citation>
    <scope>NUCLEOTIDE SEQUENCE [LARGE SCALE MRNA]</scope>
    <source>
        <strain>CB</strain>
        <tissue>Bursa of Fabricius</tissue>
    </source>
</reference>
<proteinExistence type="evidence at transcript level"/>
<accession>Q5ZHX5</accession>
<keyword id="KW-1185">Reference proteome</keyword>
<feature type="chain" id="PRO_0000274303" description="Myb/SANT-like DNA-binding domain-containing protein 2">
    <location>
        <begin position="1"/>
        <end position="556"/>
    </location>
</feature>
<feature type="domain" description="Myb-like">
    <location>
        <begin position="99"/>
        <end position="169"/>
    </location>
</feature>
<feature type="region of interest" description="Disordered" evidence="1">
    <location>
        <begin position="1"/>
        <end position="82"/>
    </location>
</feature>
<feature type="region of interest" description="Disordered" evidence="1">
    <location>
        <begin position="431"/>
        <end position="458"/>
    </location>
</feature>
<feature type="compositionally biased region" description="Polar residues" evidence="1">
    <location>
        <begin position="1"/>
        <end position="10"/>
    </location>
</feature>
<feature type="compositionally biased region" description="Polar residues" evidence="1">
    <location>
        <begin position="36"/>
        <end position="45"/>
    </location>
</feature>
<feature type="compositionally biased region" description="Gly residues" evidence="1">
    <location>
        <begin position="56"/>
        <end position="74"/>
    </location>
</feature>
<sequence length="556" mass="61022">MAASCGSSQLPAAEPPLKIPKMEVLSPGSPGALSDGNPSLSDPSTPSGASPLGPGPAAGGAGLGGGGAAGGRGGASPSVSFSPGGAAAAAAAAACRGMSWTPAETNALIAVWGNERLVEARYQQLEGAGTVFGSKAPGPAMYERVSRALAELGYERTPSQCRERIKTLRRCYSRVKEHGVGKRKSSYTFEQLEQVFGQGGWDSQPCQPVLINSSGLYQELESDGSTMEEYSQEDWGNHSQDLHCYQTGEQELDEMPTTKRTLKIKQESSEDAQKRDVMQNIMQILESVQLKWELFQSWTDFSRLHLSNKLAIFGIGYNTRWKEDIRYHYAEISSQVPLGKRLREYFNSEKPEGRVIMTRVQKMNWKNVYYKFLEITISEARCLELHMEIDWIPIAHSKPTGGNVVQYLLPGGIPKSPGLYAIGYEECHEKPRSPLAEPRGADPSNETPGELEVPSPQASLRVEMESARIIYCYLGIAEVRTLQQCLFLHFQANTKTFSKEWVGINAFLSQNCVVEPGVSPKSIYIKFVEVERDFLSAGSLVECLEKAIGYPLKFNN</sequence>
<organism>
    <name type="scientific">Gallus gallus</name>
    <name type="common">Chicken</name>
    <dbReference type="NCBI Taxonomy" id="9031"/>
    <lineage>
        <taxon>Eukaryota</taxon>
        <taxon>Metazoa</taxon>
        <taxon>Chordata</taxon>
        <taxon>Craniata</taxon>
        <taxon>Vertebrata</taxon>
        <taxon>Euteleostomi</taxon>
        <taxon>Archelosauria</taxon>
        <taxon>Archosauria</taxon>
        <taxon>Dinosauria</taxon>
        <taxon>Saurischia</taxon>
        <taxon>Theropoda</taxon>
        <taxon>Coelurosauria</taxon>
        <taxon>Aves</taxon>
        <taxon>Neognathae</taxon>
        <taxon>Galloanserae</taxon>
        <taxon>Galliformes</taxon>
        <taxon>Phasianidae</taxon>
        <taxon>Phasianinae</taxon>
        <taxon>Gallus</taxon>
    </lineage>
</organism>
<gene>
    <name type="primary">MSANTD2</name>
    <name type="ORF">RCJMB04_32e18</name>
</gene>
<evidence type="ECO:0000256" key="1">
    <source>
        <dbReference type="SAM" id="MobiDB-lite"/>
    </source>
</evidence>
<protein>
    <recommendedName>
        <fullName>Myb/SANT-like DNA-binding domain-containing protein 2</fullName>
    </recommendedName>
</protein>